<proteinExistence type="evidence at transcript level"/>
<keyword id="KW-0007">Acetylation</keyword>
<keyword id="KW-0406">Ion transport</keyword>
<keyword id="KW-1017">Isopeptide bond</keyword>
<keyword id="KW-0472">Membrane</keyword>
<keyword id="KW-0496">Mitochondrion</keyword>
<keyword id="KW-1000">Mitochondrion outer membrane</keyword>
<keyword id="KW-0520">NAD</keyword>
<keyword id="KW-0547">Nucleotide-binding</keyword>
<keyword id="KW-0597">Phosphoprotein</keyword>
<keyword id="KW-0626">Porin</keyword>
<keyword id="KW-1185">Reference proteome</keyword>
<keyword id="KW-0812">Transmembrane</keyword>
<keyword id="KW-1134">Transmembrane beta strand</keyword>
<keyword id="KW-0813">Transport</keyword>
<keyword id="KW-0832">Ubl conjugation</keyword>
<feature type="initiator methionine" description="Removed" evidence="4">
    <location>
        <position position="1"/>
    </location>
</feature>
<feature type="chain" id="PRO_0000050516" description="Non-selective voltage-gated ion channel VDAC3">
    <location>
        <begin position="2"/>
        <end position="283"/>
    </location>
</feature>
<feature type="transmembrane region" description="Beta stranded" evidence="1">
    <location>
        <begin position="26"/>
        <end position="35"/>
    </location>
</feature>
<feature type="transmembrane region" description="Beta stranded" evidence="1">
    <location>
        <begin position="39"/>
        <end position="47"/>
    </location>
</feature>
<feature type="transmembrane region" description="Beta stranded" evidence="1">
    <location>
        <begin position="54"/>
        <end position="64"/>
    </location>
</feature>
<feature type="transmembrane region" description="Beta stranded" evidence="1">
    <location>
        <begin position="69"/>
        <end position="76"/>
    </location>
</feature>
<feature type="transmembrane region" description="Beta stranded" evidence="1">
    <location>
        <begin position="80"/>
        <end position="89"/>
    </location>
</feature>
<feature type="transmembrane region" description="Beta stranded" evidence="1">
    <location>
        <begin position="95"/>
        <end position="104"/>
    </location>
</feature>
<feature type="transmembrane region" description="Beta stranded" evidence="1">
    <location>
        <begin position="111"/>
        <end position="120"/>
    </location>
</feature>
<feature type="transmembrane region" description="Beta stranded" evidence="1">
    <location>
        <begin position="123"/>
        <end position="130"/>
    </location>
</feature>
<feature type="transmembrane region" description="Beta stranded" evidence="1">
    <location>
        <begin position="137"/>
        <end position="145"/>
    </location>
</feature>
<feature type="transmembrane region" description="Beta stranded" evidence="1">
    <location>
        <begin position="150"/>
        <end position="158"/>
    </location>
</feature>
<feature type="transmembrane region" description="Beta stranded" evidence="1">
    <location>
        <begin position="163"/>
        <end position="175"/>
    </location>
</feature>
<feature type="transmembrane region" description="Beta stranded" evidence="1">
    <location>
        <begin position="178"/>
        <end position="185"/>
    </location>
</feature>
<feature type="transmembrane region" description="Beta stranded" evidence="1">
    <location>
        <begin position="189"/>
        <end position="198"/>
    </location>
</feature>
<feature type="transmembrane region" description="Beta stranded" evidence="1">
    <location>
        <begin position="202"/>
        <end position="211"/>
    </location>
</feature>
<feature type="transmembrane region" description="Beta stranded" evidence="1">
    <location>
        <begin position="218"/>
        <end position="227"/>
    </location>
</feature>
<feature type="transmembrane region" description="Beta stranded" evidence="1">
    <location>
        <begin position="231"/>
        <end position="238"/>
    </location>
</feature>
<feature type="transmembrane region" description="Beta stranded" evidence="1">
    <location>
        <begin position="242"/>
        <end position="251"/>
    </location>
</feature>
<feature type="transmembrane region" description="Beta stranded" evidence="1">
    <location>
        <begin position="254"/>
        <end position="263"/>
    </location>
</feature>
<feature type="transmembrane region" description="Beta stranded" evidence="1">
    <location>
        <begin position="273"/>
        <end position="282"/>
    </location>
</feature>
<feature type="binding site" evidence="1">
    <location>
        <begin position="242"/>
        <end position="244"/>
    </location>
    <ligand>
        <name>NAD(+)</name>
        <dbReference type="ChEBI" id="CHEBI:57540"/>
    </ligand>
</feature>
<feature type="binding site" evidence="1">
    <location>
        <begin position="260"/>
        <end position="264"/>
    </location>
    <ligand>
        <name>NAD(+)</name>
        <dbReference type="ChEBI" id="CHEBI:57540"/>
    </ligand>
</feature>
<feature type="modified residue" description="N-acetylcysteine" evidence="4">
    <location>
        <position position="2"/>
    </location>
</feature>
<feature type="modified residue" description="Phosphothreonine" evidence="4">
    <location>
        <position position="4"/>
    </location>
</feature>
<feature type="modified residue" description="N6-acetyllysine" evidence="2">
    <location>
        <position position="12"/>
    </location>
</feature>
<feature type="modified residue" description="N6-acetyllysine" evidence="2">
    <location>
        <position position="15"/>
    </location>
</feature>
<feature type="modified residue" description="N6-acetyllysine" evidence="4">
    <location>
        <position position="20"/>
    </location>
</feature>
<feature type="modified residue" description="N6-acetyllysine" evidence="4">
    <location>
        <position position="90"/>
    </location>
</feature>
<feature type="modified residue" description="Phosphoserine" evidence="3">
    <location>
        <position position="241"/>
    </location>
</feature>
<feature type="modified residue" description="N6-acetyllysine; alternate" evidence="2">
    <location>
        <position position="266"/>
    </location>
</feature>
<feature type="cross-link" description="Glycyl lysine isopeptide (Lys-Gly) (interchain with G-Cter in ubiquitin)" evidence="4">
    <location>
        <position position="53"/>
    </location>
</feature>
<feature type="cross-link" description="Glycyl lysine isopeptide (Lys-Gly) (interchain with G-Cter in ubiquitin)" evidence="4">
    <location>
        <position position="109"/>
    </location>
</feature>
<feature type="cross-link" description="Glycyl lysine isopeptide (Lys-Gly) (interchain with G-Cter in ubiquitin)" evidence="4">
    <location>
        <position position="110"/>
    </location>
</feature>
<feature type="cross-link" description="Glycyl lysine isopeptide (Lys-Gly) (interchain with G-Cter in ubiquitin); alternate" evidence="4">
    <location>
        <position position="266"/>
    </location>
</feature>
<dbReference type="EMBL" id="AF209727">
    <property type="protein sequence ID" value="AAF22837.1"/>
    <property type="molecule type" value="mRNA"/>
</dbReference>
<dbReference type="RefSeq" id="NP_001075545.1">
    <property type="nucleotide sequence ID" value="NM_001082076.1"/>
</dbReference>
<dbReference type="RefSeq" id="XP_069923910.1">
    <property type="nucleotide sequence ID" value="XM_070067809.1"/>
</dbReference>
<dbReference type="SMR" id="Q9TT13"/>
<dbReference type="FunCoup" id="Q9TT13">
    <property type="interactions" value="1618"/>
</dbReference>
<dbReference type="STRING" id="9986.ENSOCUP00000017992"/>
<dbReference type="PaxDb" id="9986-ENSOCUP00000017992"/>
<dbReference type="GeneID" id="100008752"/>
<dbReference type="KEGG" id="ocu:100008752"/>
<dbReference type="CTD" id="7419"/>
<dbReference type="eggNOG" id="KOG3126">
    <property type="taxonomic scope" value="Eukaryota"/>
</dbReference>
<dbReference type="HOGENOM" id="CLU_044399_2_0_1"/>
<dbReference type="InParanoid" id="Q9TT13"/>
<dbReference type="OMA" id="MAPPCYA"/>
<dbReference type="OrthoDB" id="7827681at2759"/>
<dbReference type="Proteomes" id="UP000001811">
    <property type="component" value="Unplaced"/>
</dbReference>
<dbReference type="GO" id="GO:0016020">
    <property type="term" value="C:membrane"/>
    <property type="evidence" value="ECO:0000250"/>
    <property type="project" value="UniProtKB"/>
</dbReference>
<dbReference type="GO" id="GO:0005741">
    <property type="term" value="C:mitochondrial outer membrane"/>
    <property type="evidence" value="ECO:0007669"/>
    <property type="project" value="UniProtKB-SubCell"/>
</dbReference>
<dbReference type="GO" id="GO:0046930">
    <property type="term" value="C:pore complex"/>
    <property type="evidence" value="ECO:0007669"/>
    <property type="project" value="UniProtKB-KW"/>
</dbReference>
<dbReference type="GO" id="GO:0000166">
    <property type="term" value="F:nucleotide binding"/>
    <property type="evidence" value="ECO:0007669"/>
    <property type="project" value="UniProtKB-KW"/>
</dbReference>
<dbReference type="GO" id="GO:0015288">
    <property type="term" value="F:porin activity"/>
    <property type="evidence" value="ECO:0007669"/>
    <property type="project" value="UniProtKB-KW"/>
</dbReference>
<dbReference type="GO" id="GO:0008308">
    <property type="term" value="F:voltage-gated monoatomic anion channel activity"/>
    <property type="evidence" value="ECO:0007669"/>
    <property type="project" value="InterPro"/>
</dbReference>
<dbReference type="GO" id="GO:0120317">
    <property type="term" value="P:sperm mitochondrial sheath assembly"/>
    <property type="evidence" value="ECO:0000250"/>
    <property type="project" value="UniProtKB"/>
</dbReference>
<dbReference type="GO" id="GO:0007283">
    <property type="term" value="P:spermatogenesis"/>
    <property type="evidence" value="ECO:0000250"/>
    <property type="project" value="UniProtKB"/>
</dbReference>
<dbReference type="CDD" id="cd07306">
    <property type="entry name" value="Porin3_VDAC"/>
    <property type="match status" value="1"/>
</dbReference>
<dbReference type="FunFam" id="2.40.160.10:FF:000001">
    <property type="entry name" value="Voltage-dependent anion-selective channel protein 2"/>
    <property type="match status" value="1"/>
</dbReference>
<dbReference type="Gene3D" id="2.40.160.10">
    <property type="entry name" value="Porin"/>
    <property type="match status" value="1"/>
</dbReference>
<dbReference type="InterPro" id="IPR023614">
    <property type="entry name" value="Porin_dom_sf"/>
</dbReference>
<dbReference type="InterPro" id="IPR001925">
    <property type="entry name" value="Porin_Euk"/>
</dbReference>
<dbReference type="InterPro" id="IPR027246">
    <property type="entry name" value="Porin_Euk/Tom40"/>
</dbReference>
<dbReference type="PANTHER" id="PTHR11743">
    <property type="entry name" value="VOLTAGE-DEPENDENT ANION-SELECTIVE CHANNEL"/>
    <property type="match status" value="1"/>
</dbReference>
<dbReference type="PANTHER" id="PTHR11743:SF28">
    <property type="entry name" value="VOLTAGE-DEPENDENT ANION-SELECTIVE CHANNEL PROTEIN 3"/>
    <property type="match status" value="1"/>
</dbReference>
<dbReference type="Pfam" id="PF01459">
    <property type="entry name" value="Porin_3"/>
    <property type="match status" value="1"/>
</dbReference>
<dbReference type="PRINTS" id="PR00185">
    <property type="entry name" value="EUKARYTPORIN"/>
</dbReference>
<dbReference type="PROSITE" id="PS00558">
    <property type="entry name" value="EUKARYOTIC_PORIN"/>
    <property type="match status" value="1"/>
</dbReference>
<sequence length="283" mass="30652">MCNTPTYCDLGKAAKDVFNKGYGFGMVKIDLRTKSCSGVEFSTSGHAYTDTGKASGNLETKYKVCNYGLTFTQKWNTDNTLGTEISLENKLAEGLKLTLDTIFVPNTGKKSGKLKASYKRDCFSLGSNVDIDFSGPTIYGWAVLAFEGWLAGYQMSFDTAKSKLSQNNFALGYKAADFQLHTHVNDGTEFGGSIYQKVNEKIETSINLAWTAGSNNTRFGIAAKYKLDCRTSLSAKVNNASLIGLGYTQTLRPGVKLTLSALIDGKNFNAGGHKVGLGFELEA</sequence>
<name>VDAC3_RABIT</name>
<protein>
    <recommendedName>
        <fullName evidence="4">Non-selective voltage-gated ion channel VDAC3</fullName>
        <shortName>VDAC-3</shortName>
    </recommendedName>
    <alternativeName>
        <fullName>Outer mitochondrial membrane protein porin 3</fullName>
    </alternativeName>
</protein>
<gene>
    <name evidence="4" type="primary">VDAC3</name>
</gene>
<evidence type="ECO:0000250" key="1">
    <source>
        <dbReference type="UniProtKB" id="P21796"/>
    </source>
</evidence>
<evidence type="ECO:0000250" key="2">
    <source>
        <dbReference type="UniProtKB" id="Q60931"/>
    </source>
</evidence>
<evidence type="ECO:0000250" key="3">
    <source>
        <dbReference type="UniProtKB" id="Q9R1Z0"/>
    </source>
</evidence>
<evidence type="ECO:0000250" key="4">
    <source>
        <dbReference type="UniProtKB" id="Q9Y277"/>
    </source>
</evidence>
<evidence type="ECO:0000305" key="5"/>
<reference key="1">
    <citation type="submission" date="1999-12" db="EMBL/GenBank/DDBJ databases">
        <authorList>
            <person name="Rae J.L."/>
        </authorList>
    </citation>
    <scope>NUCLEOTIDE SEQUENCE [MRNA]</scope>
    <source>
        <strain>New Zealand white</strain>
        <tissue>Cornea</tissue>
    </source>
</reference>
<accession>Q9TT13</accession>
<comment type="function">
    <text evidence="2 4">Non-selective voltage-gated ion channel that mediates the transport of anions and cations through the mitochondrion outer membrane and plasma membrane. Forms a high-conducting channel with a stable open state and a voltage-induced closure with a mild preference for anions over cations (By similarity). Involved in male fertility and sperm mitochondrial sheath formation (By similarity).</text>
</comment>
<comment type="catalytic activity">
    <reaction evidence="4">
        <text>chloride(in) = chloride(out)</text>
        <dbReference type="Rhea" id="RHEA:29823"/>
        <dbReference type="ChEBI" id="CHEBI:17996"/>
    </reaction>
</comment>
<comment type="catalytic activity">
    <reaction evidence="4">
        <text>K(+)(in) = K(+)(out)</text>
        <dbReference type="Rhea" id="RHEA:29463"/>
        <dbReference type="ChEBI" id="CHEBI:29103"/>
    </reaction>
</comment>
<comment type="subunit">
    <text evidence="2">Interacts with ARMC12 in a TBC1D21-dependent manner. Interacts with MISFA.</text>
</comment>
<comment type="subcellular location">
    <subcellularLocation>
        <location evidence="1">Mitochondrion outer membrane</location>
    </subcellularLocation>
    <subcellularLocation>
        <location evidence="4">Membrane</location>
    </subcellularLocation>
    <text evidence="4">May localize to non-mitochondrial membranes.</text>
</comment>
<comment type="domain">
    <text evidence="1">Consists mainly of a membrane-spanning beta-barrel formed by 19 beta-strands.</text>
</comment>
<comment type="PTM">
    <text evidence="4">Ubiquitinated by PRKN during mitophagy, leading to its degradation and enhancement of mitophagy. Deubiquitinated by USP30.</text>
</comment>
<comment type="similarity">
    <text evidence="5">Belongs to the eukaryotic mitochondrial porin family.</text>
</comment>
<organism>
    <name type="scientific">Oryctolagus cuniculus</name>
    <name type="common">Rabbit</name>
    <dbReference type="NCBI Taxonomy" id="9986"/>
    <lineage>
        <taxon>Eukaryota</taxon>
        <taxon>Metazoa</taxon>
        <taxon>Chordata</taxon>
        <taxon>Craniata</taxon>
        <taxon>Vertebrata</taxon>
        <taxon>Euteleostomi</taxon>
        <taxon>Mammalia</taxon>
        <taxon>Eutheria</taxon>
        <taxon>Euarchontoglires</taxon>
        <taxon>Glires</taxon>
        <taxon>Lagomorpha</taxon>
        <taxon>Leporidae</taxon>
        <taxon>Oryctolagus</taxon>
    </lineage>
</organism>